<feature type="chain" id="PRO_0000269159" description="Small ribosomal subunit protein uS14">
    <location>
        <begin position="1"/>
        <end position="50"/>
    </location>
</feature>
<feature type="binding site" evidence="1">
    <location>
        <position position="15"/>
    </location>
    <ligand>
        <name>Zn(2+)</name>
        <dbReference type="ChEBI" id="CHEBI:29105"/>
    </ligand>
</feature>
<feature type="binding site" evidence="1">
    <location>
        <position position="18"/>
    </location>
    <ligand>
        <name>Zn(2+)</name>
        <dbReference type="ChEBI" id="CHEBI:29105"/>
    </ligand>
</feature>
<feature type="binding site" evidence="1">
    <location>
        <position position="33"/>
    </location>
    <ligand>
        <name>Zn(2+)</name>
        <dbReference type="ChEBI" id="CHEBI:29105"/>
    </ligand>
</feature>
<feature type="binding site" evidence="1">
    <location>
        <position position="36"/>
    </location>
    <ligand>
        <name>Zn(2+)</name>
        <dbReference type="ChEBI" id="CHEBI:29105"/>
    </ligand>
</feature>
<organism>
    <name type="scientific">Methanococcoides burtonii (strain DSM 6242 / NBRC 107633 / OCM 468 / ACE-M)</name>
    <dbReference type="NCBI Taxonomy" id="259564"/>
    <lineage>
        <taxon>Archaea</taxon>
        <taxon>Methanobacteriati</taxon>
        <taxon>Methanobacteriota</taxon>
        <taxon>Stenosarchaea group</taxon>
        <taxon>Methanomicrobia</taxon>
        <taxon>Methanosarcinales</taxon>
        <taxon>Methanosarcinaceae</taxon>
        <taxon>Methanococcoides</taxon>
    </lineage>
</organism>
<protein>
    <recommendedName>
        <fullName evidence="1">Small ribosomal subunit protein uS14</fullName>
    </recommendedName>
    <alternativeName>
        <fullName evidence="2">30S ribosomal protein S14 type Z</fullName>
    </alternativeName>
</protein>
<comment type="function">
    <text evidence="1">Binds 16S rRNA, required for the assembly of 30S particles.</text>
</comment>
<comment type="cofactor">
    <cofactor evidence="1">
        <name>Zn(2+)</name>
        <dbReference type="ChEBI" id="CHEBI:29105"/>
    </cofactor>
    <text evidence="1">Binds 1 zinc ion per subunit.</text>
</comment>
<comment type="subunit">
    <text evidence="1">Part of the 30S ribosomal subunit.</text>
</comment>
<comment type="similarity">
    <text evidence="1">Belongs to the universal ribosomal protein uS14 family. Zinc-binding uS14 subfamily.</text>
</comment>
<sequence length="50" mass="5888">MTQTVKNFGRGANECKRCGRKQGLVRKYGIYLCRHCFREIAHDMGFEKYS</sequence>
<gene>
    <name evidence="1" type="primary">rps14</name>
    <name type="ordered locus">Mbur_0015</name>
</gene>
<evidence type="ECO:0000255" key="1">
    <source>
        <dbReference type="HAMAP-Rule" id="MF_01364"/>
    </source>
</evidence>
<evidence type="ECO:0000305" key="2"/>
<dbReference type="EMBL" id="CP000300">
    <property type="protein sequence ID" value="ABE51039.1"/>
    <property type="molecule type" value="Genomic_DNA"/>
</dbReference>
<dbReference type="RefSeq" id="WP_011498203.1">
    <property type="nucleotide sequence ID" value="NC_007955.1"/>
</dbReference>
<dbReference type="SMR" id="Q12ZT7"/>
<dbReference type="STRING" id="259564.Mbur_0015"/>
<dbReference type="GeneID" id="3996915"/>
<dbReference type="KEGG" id="mbu:Mbur_0015"/>
<dbReference type="HOGENOM" id="CLU_177289_2_2_2"/>
<dbReference type="OrthoDB" id="5615at2157"/>
<dbReference type="Proteomes" id="UP000001979">
    <property type="component" value="Chromosome"/>
</dbReference>
<dbReference type="GO" id="GO:0022627">
    <property type="term" value="C:cytosolic small ribosomal subunit"/>
    <property type="evidence" value="ECO:0007669"/>
    <property type="project" value="TreeGrafter"/>
</dbReference>
<dbReference type="GO" id="GO:0019843">
    <property type="term" value="F:rRNA binding"/>
    <property type="evidence" value="ECO:0007669"/>
    <property type="project" value="UniProtKB-UniRule"/>
</dbReference>
<dbReference type="GO" id="GO:0003735">
    <property type="term" value="F:structural constituent of ribosome"/>
    <property type="evidence" value="ECO:0007669"/>
    <property type="project" value="InterPro"/>
</dbReference>
<dbReference type="GO" id="GO:0008270">
    <property type="term" value="F:zinc ion binding"/>
    <property type="evidence" value="ECO:0007669"/>
    <property type="project" value="UniProtKB-UniRule"/>
</dbReference>
<dbReference type="GO" id="GO:0002181">
    <property type="term" value="P:cytoplasmic translation"/>
    <property type="evidence" value="ECO:0007669"/>
    <property type="project" value="TreeGrafter"/>
</dbReference>
<dbReference type="FunFam" id="4.10.830.10:FF:000002">
    <property type="entry name" value="40S ribosomal protein S29"/>
    <property type="match status" value="1"/>
</dbReference>
<dbReference type="Gene3D" id="4.10.830.10">
    <property type="entry name" value="30s Ribosomal Protein S14, Chain N"/>
    <property type="match status" value="1"/>
</dbReference>
<dbReference type="HAMAP" id="MF_01364_A">
    <property type="entry name" value="Ribosomal_uS14_2_A"/>
    <property type="match status" value="1"/>
</dbReference>
<dbReference type="InterPro" id="IPR001209">
    <property type="entry name" value="Ribosomal_uS14"/>
</dbReference>
<dbReference type="InterPro" id="IPR023676">
    <property type="entry name" value="Ribosomal_uS14_arc"/>
</dbReference>
<dbReference type="InterPro" id="IPR018271">
    <property type="entry name" value="Ribosomal_uS14_CS"/>
</dbReference>
<dbReference type="InterPro" id="IPR039744">
    <property type="entry name" value="RIbosomal_uS14_euk_arc"/>
</dbReference>
<dbReference type="InterPro" id="IPR043140">
    <property type="entry name" value="Ribosomal_uS14_sf"/>
</dbReference>
<dbReference type="NCBIfam" id="NF004424">
    <property type="entry name" value="PRK05766.1"/>
    <property type="match status" value="1"/>
</dbReference>
<dbReference type="PANTHER" id="PTHR12010">
    <property type="entry name" value="40S RIBOSOMAL PROTEIN S29"/>
    <property type="match status" value="1"/>
</dbReference>
<dbReference type="PANTHER" id="PTHR12010:SF2">
    <property type="entry name" value="40S RIBOSOMAL PROTEIN S29"/>
    <property type="match status" value="1"/>
</dbReference>
<dbReference type="Pfam" id="PF00253">
    <property type="entry name" value="Ribosomal_S14"/>
    <property type="match status" value="1"/>
</dbReference>
<dbReference type="SUPFAM" id="SSF57716">
    <property type="entry name" value="Glucocorticoid receptor-like (DNA-binding domain)"/>
    <property type="match status" value="1"/>
</dbReference>
<dbReference type="PROSITE" id="PS00527">
    <property type="entry name" value="RIBOSOMAL_S14"/>
    <property type="match status" value="1"/>
</dbReference>
<name>RS14Z_METBU</name>
<accession>Q12ZT7</accession>
<keyword id="KW-0479">Metal-binding</keyword>
<keyword id="KW-0687">Ribonucleoprotein</keyword>
<keyword id="KW-0689">Ribosomal protein</keyword>
<keyword id="KW-0694">RNA-binding</keyword>
<keyword id="KW-0699">rRNA-binding</keyword>
<keyword id="KW-0862">Zinc</keyword>
<reference key="1">
    <citation type="journal article" date="2009" name="ISME J.">
        <title>The genome sequence of the psychrophilic archaeon, Methanococcoides burtonii: the role of genome evolution in cold adaptation.</title>
        <authorList>
            <person name="Allen M.A."/>
            <person name="Lauro F.M."/>
            <person name="Williams T.J."/>
            <person name="Burg D."/>
            <person name="Siddiqui K.S."/>
            <person name="De Francisci D."/>
            <person name="Chong K.W."/>
            <person name="Pilak O."/>
            <person name="Chew H.H."/>
            <person name="De Maere M.Z."/>
            <person name="Ting L."/>
            <person name="Katrib M."/>
            <person name="Ng C."/>
            <person name="Sowers K.R."/>
            <person name="Galperin M.Y."/>
            <person name="Anderson I.J."/>
            <person name="Ivanova N."/>
            <person name="Dalin E."/>
            <person name="Martinez M."/>
            <person name="Lapidus A."/>
            <person name="Hauser L."/>
            <person name="Land M."/>
            <person name="Thomas T."/>
            <person name="Cavicchioli R."/>
        </authorList>
    </citation>
    <scope>NUCLEOTIDE SEQUENCE [LARGE SCALE GENOMIC DNA]</scope>
    <source>
        <strain>DSM 6242 / NBRC 107633 / OCM 468 / ACE-M</strain>
    </source>
</reference>
<proteinExistence type="inferred from homology"/>